<protein>
    <recommendedName>
        <fullName>Glucose N-acetyltransferase 1</fullName>
        <ecNumber>2.4.1.-</ecNumber>
    </recommendedName>
    <alternativeName>
        <fullName>N-acetylglucosaminyltransferase</fullName>
    </alternativeName>
</protein>
<organism>
    <name type="scientific">Candida glabrata (strain ATCC 2001 / BCRC 20586 / JCM 3761 / NBRC 0622 / NRRL Y-65 / CBS 138)</name>
    <name type="common">Yeast</name>
    <name type="synonym">Nakaseomyces glabratus</name>
    <dbReference type="NCBI Taxonomy" id="284593"/>
    <lineage>
        <taxon>Eukaryota</taxon>
        <taxon>Fungi</taxon>
        <taxon>Dikarya</taxon>
        <taxon>Ascomycota</taxon>
        <taxon>Saccharomycotina</taxon>
        <taxon>Saccharomycetes</taxon>
        <taxon>Saccharomycetales</taxon>
        <taxon>Saccharomycetaceae</taxon>
        <taxon>Nakaseomyces</taxon>
    </lineage>
</organism>
<sequence>MRLVSRRRLKGLALVAFALIGITIFVRILMEFQLEREVSFYKKFFRLKKDGLHGVYNPIDIKQIPKQTIDDLYRAKMETVSASKPIDWSKYAYVNYVTEPNYLCNTLIMFHALIKKFGTKAKLELLISNELFKSEIQSRNEQVQRILKKIRELDSEQIVIKEVQNIVKPTDQSPWNESLTKLLVFGLTEYERIIYLDNDAILQDKMDELFFLPNDITFAAPLTYWFMSEKDLEKTYKEVQHDKMSINLNKYTKQLSNRIRNGKEIYNHLPALPQSLYLNSDRVAKEILDSTSSASPLFDADSLKKVGKVKFASNLMVIKPSQETYDYIINDCLPRIVNKKEKYDMDLINEELYNLRHVVSRQVTLFRKLRSAFKPSILVLPFGTYGILTGSIRKPQEHMIMRNDILGYKNIDDEGNEIQKSIEEVVLNNKYIHFSDFPLGKPWAYSSFDQLKCRVDPASSKDVAADQKNCDVWNSIYESYFTQRMVCSKDDSPKASEIQAA</sequence>
<feature type="chain" id="PRO_0000087533" description="Glucose N-acetyltransferase 1">
    <location>
        <begin position="1"/>
        <end position="501"/>
    </location>
</feature>
<feature type="topological domain" description="Cytoplasmic" evidence="1">
    <location>
        <begin position="1"/>
        <end position="11"/>
    </location>
</feature>
<feature type="transmembrane region" description="Helical; Signal-anchor for type II membrane protein" evidence="1">
    <location>
        <begin position="12"/>
        <end position="32"/>
    </location>
</feature>
<feature type="topological domain" description="Lumenal" evidence="1">
    <location>
        <begin position="33"/>
        <end position="501"/>
    </location>
</feature>
<feature type="short sequence motif" description="DXD">
    <location>
        <begin position="197"/>
        <end position="199"/>
    </location>
</feature>
<feature type="glycosylation site" description="N-linked (GlcNAc...) asparagine" evidence="1">
    <location>
        <position position="176"/>
    </location>
</feature>
<dbReference type="EC" id="2.4.1.-"/>
<dbReference type="EMBL" id="CR380955">
    <property type="protein sequence ID" value="CAG60616.1"/>
    <property type="molecule type" value="Genomic_DNA"/>
</dbReference>
<dbReference type="RefSeq" id="XP_447679.1">
    <property type="nucleotide sequence ID" value="XM_447679.1"/>
</dbReference>
<dbReference type="FunCoup" id="Q6FQ15">
    <property type="interactions" value="25"/>
</dbReference>
<dbReference type="STRING" id="284593.Q6FQ15"/>
<dbReference type="CAZy" id="GT8">
    <property type="family name" value="Glycosyltransferase Family 8"/>
</dbReference>
<dbReference type="GlyCosmos" id="Q6FQ15">
    <property type="glycosylation" value="1 site, No reported glycans"/>
</dbReference>
<dbReference type="EnsemblFungi" id="CAGL0I09922g-T">
    <property type="protein sequence ID" value="CAGL0I09922g-T-p1"/>
    <property type="gene ID" value="CAGL0I09922g"/>
</dbReference>
<dbReference type="KEGG" id="cgr:2889277"/>
<dbReference type="CGD" id="CAL0130352">
    <property type="gene designation" value="CAGL0I09922g"/>
</dbReference>
<dbReference type="VEuPathDB" id="FungiDB:CAGL0I09922g"/>
<dbReference type="eggNOG" id="KOG1950">
    <property type="taxonomic scope" value="Eukaryota"/>
</dbReference>
<dbReference type="HOGENOM" id="CLU_034860_1_0_1"/>
<dbReference type="InParanoid" id="Q6FQ15"/>
<dbReference type="OMA" id="ILPHRVY"/>
<dbReference type="Proteomes" id="UP000002428">
    <property type="component" value="Chromosome I"/>
</dbReference>
<dbReference type="GO" id="GO:0005797">
    <property type="term" value="C:Golgi medial cisterna"/>
    <property type="evidence" value="ECO:0007669"/>
    <property type="project" value="EnsemblFungi"/>
</dbReference>
<dbReference type="GO" id="GO:0000139">
    <property type="term" value="C:Golgi membrane"/>
    <property type="evidence" value="ECO:0007669"/>
    <property type="project" value="UniProtKB-SubCell"/>
</dbReference>
<dbReference type="GO" id="GO:0005774">
    <property type="term" value="C:vacuolar membrane"/>
    <property type="evidence" value="ECO:0007669"/>
    <property type="project" value="UniProtKB-SubCell"/>
</dbReference>
<dbReference type="GO" id="GO:0008375">
    <property type="term" value="F:acetylglucosaminyltransferase activity"/>
    <property type="evidence" value="ECO:0007669"/>
    <property type="project" value="EnsemblFungi"/>
</dbReference>
<dbReference type="GO" id="GO:0006487">
    <property type="term" value="P:protein N-linked glycosylation"/>
    <property type="evidence" value="ECO:0007669"/>
    <property type="project" value="EnsemblFungi"/>
</dbReference>
<dbReference type="Gene3D" id="3.90.550.10">
    <property type="entry name" value="Spore Coat Polysaccharide Biosynthesis Protein SpsA, Chain A"/>
    <property type="match status" value="1"/>
</dbReference>
<dbReference type="InterPro" id="IPR002495">
    <property type="entry name" value="Glyco_trans_8"/>
</dbReference>
<dbReference type="InterPro" id="IPR050587">
    <property type="entry name" value="GNT1/Glycosyltrans_8"/>
</dbReference>
<dbReference type="InterPro" id="IPR029044">
    <property type="entry name" value="Nucleotide-diphossugar_trans"/>
</dbReference>
<dbReference type="PANTHER" id="PTHR11183">
    <property type="entry name" value="GLYCOGENIN SUBFAMILY MEMBER"/>
    <property type="match status" value="1"/>
</dbReference>
<dbReference type="Pfam" id="PF01501">
    <property type="entry name" value="Glyco_transf_8"/>
    <property type="match status" value="1"/>
</dbReference>
<dbReference type="SUPFAM" id="SSF53448">
    <property type="entry name" value="Nucleotide-diphospho-sugar transferases"/>
    <property type="match status" value="1"/>
</dbReference>
<reference key="1">
    <citation type="journal article" date="2004" name="Nature">
        <title>Genome evolution in yeasts.</title>
        <authorList>
            <person name="Dujon B."/>
            <person name="Sherman D."/>
            <person name="Fischer G."/>
            <person name="Durrens P."/>
            <person name="Casaregola S."/>
            <person name="Lafontaine I."/>
            <person name="de Montigny J."/>
            <person name="Marck C."/>
            <person name="Neuveglise C."/>
            <person name="Talla E."/>
            <person name="Goffard N."/>
            <person name="Frangeul L."/>
            <person name="Aigle M."/>
            <person name="Anthouard V."/>
            <person name="Babour A."/>
            <person name="Barbe V."/>
            <person name="Barnay S."/>
            <person name="Blanchin S."/>
            <person name="Beckerich J.-M."/>
            <person name="Beyne E."/>
            <person name="Bleykasten C."/>
            <person name="Boisrame A."/>
            <person name="Boyer J."/>
            <person name="Cattolico L."/>
            <person name="Confanioleri F."/>
            <person name="de Daruvar A."/>
            <person name="Despons L."/>
            <person name="Fabre E."/>
            <person name="Fairhead C."/>
            <person name="Ferry-Dumazet H."/>
            <person name="Groppi A."/>
            <person name="Hantraye F."/>
            <person name="Hennequin C."/>
            <person name="Jauniaux N."/>
            <person name="Joyet P."/>
            <person name="Kachouri R."/>
            <person name="Kerrest A."/>
            <person name="Koszul R."/>
            <person name="Lemaire M."/>
            <person name="Lesur I."/>
            <person name="Ma L."/>
            <person name="Muller H."/>
            <person name="Nicaud J.-M."/>
            <person name="Nikolski M."/>
            <person name="Oztas S."/>
            <person name="Ozier-Kalogeropoulos O."/>
            <person name="Pellenz S."/>
            <person name="Potier S."/>
            <person name="Richard G.-F."/>
            <person name="Straub M.-L."/>
            <person name="Suleau A."/>
            <person name="Swennen D."/>
            <person name="Tekaia F."/>
            <person name="Wesolowski-Louvel M."/>
            <person name="Westhof E."/>
            <person name="Wirth B."/>
            <person name="Zeniou-Meyer M."/>
            <person name="Zivanovic Y."/>
            <person name="Bolotin-Fukuhara M."/>
            <person name="Thierry A."/>
            <person name="Bouchier C."/>
            <person name="Caudron B."/>
            <person name="Scarpelli C."/>
            <person name="Gaillardin C."/>
            <person name="Weissenbach J."/>
            <person name="Wincker P."/>
            <person name="Souciet J.-L."/>
        </authorList>
    </citation>
    <scope>NUCLEOTIDE SEQUENCE [LARGE SCALE GENOMIC DNA]</scope>
    <source>
        <strain>ATCC 2001 / BCRC 20586 / JCM 3761 / NBRC 0622 / NRRL Y-65 / CBS 138</strain>
    </source>
</reference>
<gene>
    <name type="primary">GNT1</name>
    <name type="ordered locus">CAGL0I09922g</name>
</gene>
<keyword id="KW-0325">Glycoprotein</keyword>
<keyword id="KW-0333">Golgi apparatus</keyword>
<keyword id="KW-0472">Membrane</keyword>
<keyword id="KW-1185">Reference proteome</keyword>
<keyword id="KW-0735">Signal-anchor</keyword>
<keyword id="KW-0808">Transferase</keyword>
<keyword id="KW-0812">Transmembrane</keyword>
<keyword id="KW-1133">Transmembrane helix</keyword>
<keyword id="KW-0926">Vacuole</keyword>
<name>GNT1_CANGA</name>
<proteinExistence type="inferred from homology"/>
<accession>Q6FQ15</accession>
<evidence type="ECO:0000255" key="1"/>
<evidence type="ECO:0000305" key="2"/>
<comment type="function">
    <text>N-acetylglucosaminyltransferase involved in the Golgi-specific modification of N-linked glycans.</text>
</comment>
<comment type="subcellular location">
    <subcellularLocation>
        <location evidence="2">Golgi apparatus membrane</location>
        <topology evidence="2">Single-pass type II membrane protein</topology>
    </subcellularLocation>
    <subcellularLocation>
        <location evidence="2">Vacuole membrane</location>
        <topology evidence="2">Single-pass type II membrane protein</topology>
    </subcellularLocation>
</comment>
<comment type="similarity">
    <text evidence="2">Belongs to the GNT1 family.</text>
</comment>